<feature type="chain" id="PRO_0000141952" description="3-isopropylmalate dehydratase small subunit">
    <location>
        <begin position="1"/>
        <end position="165"/>
    </location>
</feature>
<gene>
    <name type="primary">leuD</name>
    <name type="ordered locus">SSO2470</name>
</gene>
<sequence length="165" mass="18046">MIIEGPVIKFGDKIDTDIIIPARYLKYTDPQYLAQHVMEPLDPEFYKKASKGVIIVAGKVFGMGSSREQAAIALKAAGVKAVVAESFARIFYRNAINNGLPVITLPNSTKEIDENSYVKIDVETGEILVGNKVLKGKGITGMALEILQAGGIMEYLKKMQTVNRN</sequence>
<evidence type="ECO:0000250" key="1"/>
<evidence type="ECO:0000305" key="2"/>
<protein>
    <recommendedName>
        <fullName>3-isopropylmalate dehydratase small subunit</fullName>
        <ecNumber>4.2.1.33</ecNumber>
    </recommendedName>
    <alternativeName>
        <fullName>Alpha-IPM isomerase</fullName>
        <shortName>IPMI</shortName>
    </alternativeName>
    <alternativeName>
        <fullName>Isopropylmalate isomerase</fullName>
    </alternativeName>
</protein>
<accession>Q97VY3</accession>
<dbReference type="EC" id="4.2.1.33"/>
<dbReference type="EMBL" id="AE006641">
    <property type="protein sequence ID" value="AAK42607.1"/>
    <property type="molecule type" value="Genomic_DNA"/>
</dbReference>
<dbReference type="PIR" id="H90418">
    <property type="entry name" value="H90418"/>
</dbReference>
<dbReference type="RefSeq" id="WP_010923875.1">
    <property type="nucleotide sequence ID" value="NC_002754.1"/>
</dbReference>
<dbReference type="SMR" id="Q97VY3"/>
<dbReference type="FunCoup" id="Q97VY3">
    <property type="interactions" value="136"/>
</dbReference>
<dbReference type="STRING" id="273057.SSO2470"/>
<dbReference type="PaxDb" id="273057-SSO2470"/>
<dbReference type="EnsemblBacteria" id="AAK42607">
    <property type="protein sequence ID" value="AAK42607"/>
    <property type="gene ID" value="SSO2470"/>
</dbReference>
<dbReference type="GeneID" id="7808220"/>
<dbReference type="KEGG" id="sso:SSO2470"/>
<dbReference type="PATRIC" id="fig|273057.12.peg.2547"/>
<dbReference type="eggNOG" id="arCOG02230">
    <property type="taxonomic scope" value="Archaea"/>
</dbReference>
<dbReference type="HOGENOM" id="CLU_081378_1_1_2"/>
<dbReference type="InParanoid" id="Q97VY3"/>
<dbReference type="PhylomeDB" id="Q97VY3"/>
<dbReference type="UniPathway" id="UPA00048">
    <property type="reaction ID" value="UER00071"/>
</dbReference>
<dbReference type="Proteomes" id="UP000001974">
    <property type="component" value="Chromosome"/>
</dbReference>
<dbReference type="GO" id="GO:0003861">
    <property type="term" value="F:3-isopropylmalate dehydratase activity"/>
    <property type="evidence" value="ECO:0007669"/>
    <property type="project" value="UniProtKB-UniRule"/>
</dbReference>
<dbReference type="GO" id="GO:0009098">
    <property type="term" value="P:L-leucine biosynthetic process"/>
    <property type="evidence" value="ECO:0007669"/>
    <property type="project" value="UniProtKB-UniRule"/>
</dbReference>
<dbReference type="CDD" id="cd01577">
    <property type="entry name" value="IPMI_Swivel"/>
    <property type="match status" value="1"/>
</dbReference>
<dbReference type="Gene3D" id="3.20.19.10">
    <property type="entry name" value="Aconitase, domain 4"/>
    <property type="match status" value="1"/>
</dbReference>
<dbReference type="HAMAP" id="MF_01032">
    <property type="entry name" value="LeuD_type2"/>
    <property type="match status" value="1"/>
</dbReference>
<dbReference type="InterPro" id="IPR015928">
    <property type="entry name" value="Aconitase/3IPM_dehydase_swvl"/>
</dbReference>
<dbReference type="InterPro" id="IPR000573">
    <property type="entry name" value="AconitaseA/IPMdHydase_ssu_swvl"/>
</dbReference>
<dbReference type="InterPro" id="IPR033940">
    <property type="entry name" value="IPMI_Swivel"/>
</dbReference>
<dbReference type="InterPro" id="IPR050075">
    <property type="entry name" value="LeuD"/>
</dbReference>
<dbReference type="InterPro" id="IPR011827">
    <property type="entry name" value="LeuD_type2/HacB/DmdB"/>
</dbReference>
<dbReference type="NCBIfam" id="TIGR02087">
    <property type="entry name" value="LEUD_arch"/>
    <property type="match status" value="1"/>
</dbReference>
<dbReference type="PANTHER" id="PTHR43345:SF2">
    <property type="entry name" value="3-ISOPROPYLMALATE DEHYDRATASE SMALL SUBUNIT 1"/>
    <property type="match status" value="1"/>
</dbReference>
<dbReference type="PANTHER" id="PTHR43345">
    <property type="entry name" value="3-ISOPROPYLMALATE DEHYDRATASE SMALL SUBUNIT 2-RELATED-RELATED"/>
    <property type="match status" value="1"/>
</dbReference>
<dbReference type="Pfam" id="PF00694">
    <property type="entry name" value="Aconitase_C"/>
    <property type="match status" value="1"/>
</dbReference>
<dbReference type="SUPFAM" id="SSF52016">
    <property type="entry name" value="LeuD/IlvD-like"/>
    <property type="match status" value="1"/>
</dbReference>
<organism>
    <name type="scientific">Saccharolobus solfataricus (strain ATCC 35092 / DSM 1617 / JCM 11322 / P2)</name>
    <name type="common">Sulfolobus solfataricus</name>
    <dbReference type="NCBI Taxonomy" id="273057"/>
    <lineage>
        <taxon>Archaea</taxon>
        <taxon>Thermoproteota</taxon>
        <taxon>Thermoprotei</taxon>
        <taxon>Sulfolobales</taxon>
        <taxon>Sulfolobaceae</taxon>
        <taxon>Saccharolobus</taxon>
    </lineage>
</organism>
<proteinExistence type="inferred from homology"/>
<reference key="1">
    <citation type="journal article" date="2001" name="Proc. Natl. Acad. Sci. U.S.A.">
        <title>The complete genome of the crenarchaeon Sulfolobus solfataricus P2.</title>
        <authorList>
            <person name="She Q."/>
            <person name="Singh R.K."/>
            <person name="Confalonieri F."/>
            <person name="Zivanovic Y."/>
            <person name="Allard G."/>
            <person name="Awayez M.J."/>
            <person name="Chan-Weiher C.C.-Y."/>
            <person name="Clausen I.G."/>
            <person name="Curtis B.A."/>
            <person name="De Moors A."/>
            <person name="Erauso G."/>
            <person name="Fletcher C."/>
            <person name="Gordon P.M.K."/>
            <person name="Heikamp-de Jong I."/>
            <person name="Jeffries A.C."/>
            <person name="Kozera C.J."/>
            <person name="Medina N."/>
            <person name="Peng X."/>
            <person name="Thi-Ngoc H.P."/>
            <person name="Redder P."/>
            <person name="Schenk M.E."/>
            <person name="Theriault C."/>
            <person name="Tolstrup N."/>
            <person name="Charlebois R.L."/>
            <person name="Doolittle W.F."/>
            <person name="Duguet M."/>
            <person name="Gaasterland T."/>
            <person name="Garrett R.A."/>
            <person name="Ragan M.A."/>
            <person name="Sensen C.W."/>
            <person name="Van der Oost J."/>
        </authorList>
    </citation>
    <scope>NUCLEOTIDE SEQUENCE [LARGE SCALE GENOMIC DNA]</scope>
    <source>
        <strain>ATCC 35092 / DSM 1617 / JCM 11322 / P2</strain>
    </source>
</reference>
<name>LEUD_SACS2</name>
<keyword id="KW-0028">Amino-acid biosynthesis</keyword>
<keyword id="KW-0100">Branched-chain amino acid biosynthesis</keyword>
<keyword id="KW-0432">Leucine biosynthesis</keyword>
<keyword id="KW-0456">Lyase</keyword>
<keyword id="KW-1185">Reference proteome</keyword>
<comment type="function">
    <text evidence="1">Catalyzes the isomerization between 2-isopropylmalate and 3-isopropylmalate, via the formation of 2-isopropylmaleate.</text>
</comment>
<comment type="catalytic activity">
    <reaction>
        <text>(2R,3S)-3-isopropylmalate = (2S)-2-isopropylmalate</text>
        <dbReference type="Rhea" id="RHEA:32287"/>
        <dbReference type="ChEBI" id="CHEBI:1178"/>
        <dbReference type="ChEBI" id="CHEBI:35121"/>
        <dbReference type="EC" id="4.2.1.33"/>
    </reaction>
</comment>
<comment type="pathway">
    <text>Amino-acid biosynthesis; L-leucine biosynthesis; L-leucine from 3-methyl-2-oxobutanoate: step 2/4.</text>
</comment>
<comment type="subunit">
    <text evidence="1">Heterodimer of LeuC and LeuD.</text>
</comment>
<comment type="similarity">
    <text evidence="2">Belongs to the LeuD family. LeuD type 2 subfamily.</text>
</comment>